<gene>
    <name type="primary">AOX1</name>
</gene>
<reference key="1">
    <citation type="journal article" date="1994" name="Plant Physiol.">
        <title>Mitochondrial electron transport regulation of nuclear gene expression. Studies with the alternative oxidase gene of tobacco.</title>
        <authorList>
            <person name="Vanlerberghe G.C."/>
            <person name="McIntosh L."/>
        </authorList>
    </citation>
    <scope>NUCLEOTIDE SEQUENCE [MRNA]</scope>
    <scope>FUNCTION</scope>
    <scope>CATALYTIC ACTIVITY</scope>
    <source>
        <strain>cv. Bright Yellow</strain>
    </source>
</reference>
<reference key="2">
    <citation type="journal article" date="1995" name="FEBS Lett.">
        <title>The active site of the cyanide-resistant oxidase from plant mitochondria contains a binuclear iron center.</title>
        <authorList>
            <person name="Siedow J.N."/>
            <person name="Umbach A.L."/>
            <person name="Moore A.L."/>
        </authorList>
    </citation>
    <scope>IRON-BINDING SITES</scope>
    <scope>COFACTOR</scope>
</reference>
<reference key="3">
    <citation type="journal article" date="1996" name="Plant Physiol.">
        <title>Signals regulating the expression of the nuclear gene encoding alternative oxidase of plant mitochondria.</title>
        <authorList>
            <person name="Vanlerberghe G.C."/>
            <person name="McLntosh L."/>
        </authorList>
    </citation>
    <scope>INDUCTION</scope>
</reference>
<reference key="4">
    <citation type="journal article" date="1998" name="Plant Cell">
        <title>Molecular localization of a redox-modulated process regulating plant mitochondrial electron transport.</title>
        <authorList>
            <person name="Vanlerberghe G.C."/>
            <person name="McIntosh L."/>
            <person name="Yip J.Y."/>
        </authorList>
    </citation>
    <scope>SUBUNIT</scope>
    <scope>DISULFIDE BOND</scope>
    <scope>MUTAGENESIS OF CYS-126 AND CYS-176</scope>
    <scope>ACTIVITY REGULATION</scope>
</reference>
<reference key="5">
    <citation type="journal article" date="1999" name="FEBS Lett.">
        <title>A revised model of the active site of alternative oxidase.</title>
        <authorList>
            <person name="Andersson M.E."/>
            <person name="Nordlund P."/>
        </authorList>
    </citation>
    <scope>IRON-BINDING SITES</scope>
</reference>
<comment type="function">
    <text evidence="6">Catalyzes the cyanide-resistant oxidation of ubiquinol and the reduction of molecular oxygen to water, but does not translocate protons and consequently is not linked to oxidative phosphorylation. May increase respiration when the cytochrome respiratory pathway is restricted, or in response to low temperatures.</text>
</comment>
<comment type="catalytic activity">
    <reaction evidence="6">
        <text>2 a ubiquinol + O2 = 2 a ubiquinone + 2 H2O</text>
        <dbReference type="Rhea" id="RHEA:30255"/>
        <dbReference type="Rhea" id="RHEA-COMP:9565"/>
        <dbReference type="Rhea" id="RHEA-COMP:9566"/>
        <dbReference type="ChEBI" id="CHEBI:15377"/>
        <dbReference type="ChEBI" id="CHEBI:15379"/>
        <dbReference type="ChEBI" id="CHEBI:16389"/>
        <dbReference type="ChEBI" id="CHEBI:17976"/>
        <dbReference type="EC" id="1.10.3.11"/>
    </reaction>
</comment>
<comment type="cofactor">
    <cofactor evidence="5">
        <name>Fe cation</name>
        <dbReference type="ChEBI" id="CHEBI:24875"/>
    </cofactor>
    <text evidence="5">Binds 2 iron ions per subunit.</text>
</comment>
<comment type="activity regulation">
    <text evidence="7">Stimulated by reduction of the disulfide bond and the presence of pyruvate.</text>
</comment>
<comment type="subunit">
    <text evidence="7">Homodimer; disulfide-linked.</text>
</comment>
<comment type="subcellular location">
    <subcellularLocation>
        <location evidence="8">Mitochondrion inner membrane</location>
        <topology evidence="8">Multi-pass membrane protein</topology>
    </subcellularLocation>
    <text>Mitochondrial, possibly in the inner surface of the inner mitochondrial membrane.</text>
</comment>
<comment type="induction">
    <text evidence="4">Up-regulated by acetate, citrate, antimycin A, cysteine and H(2)O(2).</text>
</comment>
<comment type="similarity">
    <text evidence="8">Belongs to the alternative oxidase family.</text>
</comment>
<evidence type="ECO:0000250" key="1">
    <source>
        <dbReference type="UniProtKB" id="Q26710"/>
    </source>
</evidence>
<evidence type="ECO:0000255" key="2"/>
<evidence type="ECO:0000256" key="3">
    <source>
        <dbReference type="SAM" id="MobiDB-lite"/>
    </source>
</evidence>
<evidence type="ECO:0000269" key="4">
    <source>
    </source>
</evidence>
<evidence type="ECO:0000269" key="5">
    <source>
    </source>
</evidence>
<evidence type="ECO:0000269" key="6">
    <source>
    </source>
</evidence>
<evidence type="ECO:0000269" key="7">
    <source>
    </source>
</evidence>
<evidence type="ECO:0000305" key="8"/>
<dbReference type="EC" id="1.10.3.11"/>
<dbReference type="EMBL" id="S71335">
    <property type="protein sequence ID" value="AAC60576.1"/>
    <property type="molecule type" value="mRNA"/>
</dbReference>
<dbReference type="PIR" id="T04094">
    <property type="entry name" value="T04094"/>
</dbReference>
<dbReference type="SMR" id="Q41224"/>
<dbReference type="STRING" id="4097.Q41224"/>
<dbReference type="PaxDb" id="4097-Q41224"/>
<dbReference type="Proteomes" id="UP000084051">
    <property type="component" value="Unplaced"/>
</dbReference>
<dbReference type="GO" id="GO:0005743">
    <property type="term" value="C:mitochondrial inner membrane"/>
    <property type="evidence" value="ECO:0007669"/>
    <property type="project" value="UniProtKB-SubCell"/>
</dbReference>
<dbReference type="GO" id="GO:0005739">
    <property type="term" value="C:mitochondrion"/>
    <property type="evidence" value="ECO:0000318"/>
    <property type="project" value="GO_Central"/>
</dbReference>
<dbReference type="GO" id="GO:0009916">
    <property type="term" value="F:alternative oxidase activity"/>
    <property type="evidence" value="ECO:0000318"/>
    <property type="project" value="GO_Central"/>
</dbReference>
<dbReference type="GO" id="GO:0046872">
    <property type="term" value="F:metal ion binding"/>
    <property type="evidence" value="ECO:0007669"/>
    <property type="project" value="UniProtKB-KW"/>
</dbReference>
<dbReference type="GO" id="GO:0106292">
    <property type="term" value="F:superoxide-generating NADPH oxidase activity"/>
    <property type="evidence" value="ECO:0007669"/>
    <property type="project" value="UniProtKB-ARBA"/>
</dbReference>
<dbReference type="GO" id="GO:0102721">
    <property type="term" value="F:ubiquinol:oxygen oxidoreductase activity"/>
    <property type="evidence" value="ECO:0007669"/>
    <property type="project" value="UniProtKB-EC"/>
</dbReference>
<dbReference type="GO" id="GO:0010230">
    <property type="term" value="P:alternative respiration"/>
    <property type="evidence" value="ECO:0000318"/>
    <property type="project" value="GO_Central"/>
</dbReference>
<dbReference type="CDD" id="cd01053">
    <property type="entry name" value="AOX"/>
    <property type="match status" value="1"/>
</dbReference>
<dbReference type="FunFam" id="1.20.1260.140:FF:000001">
    <property type="entry name" value="Ubiquinol oxidase"/>
    <property type="match status" value="1"/>
</dbReference>
<dbReference type="Gene3D" id="1.20.1260.140">
    <property type="entry name" value="Alternative oxidase"/>
    <property type="match status" value="1"/>
</dbReference>
<dbReference type="InterPro" id="IPR002680">
    <property type="entry name" value="AOX"/>
</dbReference>
<dbReference type="InterPro" id="IPR038659">
    <property type="entry name" value="AOX_sf"/>
</dbReference>
<dbReference type="PANTHER" id="PTHR31803">
    <property type="entry name" value="ALTERNATIVE OXIDASE"/>
    <property type="match status" value="1"/>
</dbReference>
<dbReference type="PANTHER" id="PTHR31803:SF3">
    <property type="entry name" value="ALTERNATIVE OXIDASE"/>
    <property type="match status" value="1"/>
</dbReference>
<dbReference type="Pfam" id="PF01786">
    <property type="entry name" value="AOX"/>
    <property type="match status" value="1"/>
</dbReference>
<accession>Q41224</accession>
<sequence>MMTRGATRMTRTVLGHMGPRYFSTAIFRNDAGTGVMSGAAVFMHGVPANPSEKAVVTWVRHFPVMGSRSAMSMALNDKQHDKKAENGSAAATGGGDGGDEKSVVSYWGVQPSKVTKEDGTEWKWNCFRPWETYKADLSIDLTKHHAPTTFLDKFAYWTVKSLRYPTDIFFQRRYGCRAMMLETVAAVPGMVGGMLLHCKSLRRFEQSGGWIKTLLDEAENERMHLMTFMEVAKPNWYERALVFAVQGVFFNAYFVTYLLSPKLAHRIVGYLEEEAIHSYTEFLKELDKGNIENVPAPAIAIDYCRLPKDSTLLDVVLVVRADEAHHRDVNHFASDIHYQGQQLKDSPAPIGYH</sequence>
<name>AOX1_TOBAC</name>
<keyword id="KW-1015">Disulfide bond</keyword>
<keyword id="KW-0249">Electron transport</keyword>
<keyword id="KW-0408">Iron</keyword>
<keyword id="KW-0472">Membrane</keyword>
<keyword id="KW-0479">Metal-binding</keyword>
<keyword id="KW-0496">Mitochondrion</keyword>
<keyword id="KW-0999">Mitochondrion inner membrane</keyword>
<keyword id="KW-0560">Oxidoreductase</keyword>
<keyword id="KW-1185">Reference proteome</keyword>
<keyword id="KW-0679">Respiratory chain</keyword>
<keyword id="KW-0809">Transit peptide</keyword>
<keyword id="KW-0812">Transmembrane</keyword>
<keyword id="KW-1133">Transmembrane helix</keyword>
<keyword id="KW-0813">Transport</keyword>
<feature type="transit peptide" description="Mitochondrion" evidence="2">
    <location>
        <begin position="1"/>
        <end position="69"/>
    </location>
</feature>
<feature type="chain" id="PRO_0000001740" description="Ubiquinol oxidase 1, mitochondrial">
    <location>
        <begin position="70"/>
        <end position="353"/>
    </location>
</feature>
<feature type="transmembrane region" description="Helical" evidence="2">
    <location>
        <begin position="178"/>
        <end position="198"/>
    </location>
</feature>
<feature type="transmembrane region" description="Helical" evidence="2">
    <location>
        <begin position="240"/>
        <end position="260"/>
    </location>
</feature>
<feature type="region of interest" description="Disordered" evidence="3">
    <location>
        <begin position="77"/>
        <end position="99"/>
    </location>
</feature>
<feature type="binding site" evidence="1">
    <location>
        <position position="182"/>
    </location>
    <ligand>
        <name>Fe cation</name>
        <dbReference type="ChEBI" id="CHEBI:24875"/>
        <label>1</label>
    </ligand>
</feature>
<feature type="binding site" evidence="1">
    <location>
        <position position="221"/>
    </location>
    <ligand>
        <name>Fe cation</name>
        <dbReference type="ChEBI" id="CHEBI:24875"/>
        <label>1</label>
    </ligand>
</feature>
<feature type="binding site" evidence="1">
    <location>
        <position position="221"/>
    </location>
    <ligand>
        <name>Fe cation</name>
        <dbReference type="ChEBI" id="CHEBI:24875"/>
        <label>2</label>
    </ligand>
</feature>
<feature type="binding site" evidence="1">
    <location>
        <position position="224"/>
    </location>
    <ligand>
        <name>Fe cation</name>
        <dbReference type="ChEBI" id="CHEBI:24875"/>
        <label>1</label>
    </ligand>
</feature>
<feature type="binding site" evidence="1">
    <location>
        <position position="272"/>
    </location>
    <ligand>
        <name>Fe cation</name>
        <dbReference type="ChEBI" id="CHEBI:24875"/>
        <label>2</label>
    </ligand>
</feature>
<feature type="binding site" evidence="1">
    <location>
        <position position="323"/>
    </location>
    <ligand>
        <name>Fe cation</name>
        <dbReference type="ChEBI" id="CHEBI:24875"/>
        <label>1</label>
    </ligand>
</feature>
<feature type="binding site" evidence="1">
    <location>
        <position position="323"/>
    </location>
    <ligand>
        <name>Fe cation</name>
        <dbReference type="ChEBI" id="CHEBI:24875"/>
        <label>2</label>
    </ligand>
</feature>
<feature type="binding site" evidence="1">
    <location>
        <position position="326"/>
    </location>
    <ligand>
        <name>Fe cation</name>
        <dbReference type="ChEBI" id="CHEBI:24875"/>
        <label>2</label>
    </ligand>
</feature>
<feature type="disulfide bond" description="Interchain" evidence="7">
    <location>
        <position position="126"/>
    </location>
</feature>
<feature type="mutagenesis site" description="Loss of disulfide bond formation, activity and stimulation by pyruvate." evidence="7">
    <original>C</original>
    <variation>A</variation>
    <location>
        <position position="126"/>
    </location>
</feature>
<feature type="mutagenesis site" description="No effect on disulfide bond formation and on stimulation by pyruvate." evidence="7">
    <original>C</original>
    <variation>A</variation>
    <location>
        <position position="176"/>
    </location>
</feature>
<organism>
    <name type="scientific">Nicotiana tabacum</name>
    <name type="common">Common tobacco</name>
    <dbReference type="NCBI Taxonomy" id="4097"/>
    <lineage>
        <taxon>Eukaryota</taxon>
        <taxon>Viridiplantae</taxon>
        <taxon>Streptophyta</taxon>
        <taxon>Embryophyta</taxon>
        <taxon>Tracheophyta</taxon>
        <taxon>Spermatophyta</taxon>
        <taxon>Magnoliopsida</taxon>
        <taxon>eudicotyledons</taxon>
        <taxon>Gunneridae</taxon>
        <taxon>Pentapetalae</taxon>
        <taxon>asterids</taxon>
        <taxon>lamiids</taxon>
        <taxon>Solanales</taxon>
        <taxon>Solanaceae</taxon>
        <taxon>Nicotianoideae</taxon>
        <taxon>Nicotianeae</taxon>
        <taxon>Nicotiana</taxon>
    </lineage>
</organism>
<protein>
    <recommendedName>
        <fullName>Ubiquinol oxidase 1, mitochondrial</fullName>
        <ecNumber>1.10.3.11</ecNumber>
    </recommendedName>
    <alternativeName>
        <fullName>Alternative oxidase 1</fullName>
    </alternativeName>
</protein>
<proteinExistence type="evidence at protein level"/>